<reference key="1">
    <citation type="journal article" date="2009" name="PLoS Genet.">
        <title>Organised genome dynamics in the Escherichia coli species results in highly diverse adaptive paths.</title>
        <authorList>
            <person name="Touchon M."/>
            <person name="Hoede C."/>
            <person name="Tenaillon O."/>
            <person name="Barbe V."/>
            <person name="Baeriswyl S."/>
            <person name="Bidet P."/>
            <person name="Bingen E."/>
            <person name="Bonacorsi S."/>
            <person name="Bouchier C."/>
            <person name="Bouvet O."/>
            <person name="Calteau A."/>
            <person name="Chiapello H."/>
            <person name="Clermont O."/>
            <person name="Cruveiller S."/>
            <person name="Danchin A."/>
            <person name="Diard M."/>
            <person name="Dossat C."/>
            <person name="Karoui M.E."/>
            <person name="Frapy E."/>
            <person name="Garry L."/>
            <person name="Ghigo J.M."/>
            <person name="Gilles A.M."/>
            <person name="Johnson J."/>
            <person name="Le Bouguenec C."/>
            <person name="Lescat M."/>
            <person name="Mangenot S."/>
            <person name="Martinez-Jehanne V."/>
            <person name="Matic I."/>
            <person name="Nassif X."/>
            <person name="Oztas S."/>
            <person name="Petit M.A."/>
            <person name="Pichon C."/>
            <person name="Rouy Z."/>
            <person name="Ruf C.S."/>
            <person name="Schneider D."/>
            <person name="Tourret J."/>
            <person name="Vacherie B."/>
            <person name="Vallenet D."/>
            <person name="Medigue C."/>
            <person name="Rocha E.P.C."/>
            <person name="Denamur E."/>
        </authorList>
    </citation>
    <scope>NUCLEOTIDE SEQUENCE [LARGE SCALE GENOMIC DNA]</scope>
    <source>
        <strain>IAI39 / ExPEC</strain>
    </source>
</reference>
<name>HIS8_ECO7I</name>
<protein>
    <recommendedName>
        <fullName evidence="1">Histidinol-phosphate aminotransferase</fullName>
        <ecNumber evidence="1">2.6.1.9</ecNumber>
    </recommendedName>
    <alternativeName>
        <fullName evidence="1">Imidazole acetol-phosphate transaminase</fullName>
    </alternativeName>
</protein>
<dbReference type="EC" id="2.6.1.9" evidence="1"/>
<dbReference type="EMBL" id="CU928164">
    <property type="protein sequence ID" value="CAR17134.1"/>
    <property type="molecule type" value="Genomic_DNA"/>
</dbReference>
<dbReference type="RefSeq" id="WP_000108921.1">
    <property type="nucleotide sequence ID" value="NC_011750.1"/>
</dbReference>
<dbReference type="RefSeq" id="YP_002407019.1">
    <property type="nucleotide sequence ID" value="NC_011750.1"/>
</dbReference>
<dbReference type="SMR" id="B7NQG9"/>
<dbReference type="STRING" id="585057.ECIAI39_0997"/>
<dbReference type="KEGG" id="ect:ECIAI39_0997"/>
<dbReference type="PATRIC" id="fig|585057.6.peg.1046"/>
<dbReference type="HOGENOM" id="CLU_017584_3_1_6"/>
<dbReference type="UniPathway" id="UPA00031">
    <property type="reaction ID" value="UER00012"/>
</dbReference>
<dbReference type="Proteomes" id="UP000000749">
    <property type="component" value="Chromosome"/>
</dbReference>
<dbReference type="GO" id="GO:0004400">
    <property type="term" value="F:histidinol-phosphate transaminase activity"/>
    <property type="evidence" value="ECO:0007669"/>
    <property type="project" value="UniProtKB-UniRule"/>
</dbReference>
<dbReference type="GO" id="GO:0030170">
    <property type="term" value="F:pyridoxal phosphate binding"/>
    <property type="evidence" value="ECO:0007669"/>
    <property type="project" value="InterPro"/>
</dbReference>
<dbReference type="GO" id="GO:0000105">
    <property type="term" value="P:L-histidine biosynthetic process"/>
    <property type="evidence" value="ECO:0007669"/>
    <property type="project" value="UniProtKB-UniRule"/>
</dbReference>
<dbReference type="CDD" id="cd00609">
    <property type="entry name" value="AAT_like"/>
    <property type="match status" value="1"/>
</dbReference>
<dbReference type="FunFam" id="3.40.640.10:FF:000032">
    <property type="entry name" value="Histidinol-phosphate aminotransferase"/>
    <property type="match status" value="1"/>
</dbReference>
<dbReference type="FunFam" id="3.90.1150.10:FF:000042">
    <property type="entry name" value="Histidinol-phosphate aminotransferase"/>
    <property type="match status" value="1"/>
</dbReference>
<dbReference type="Gene3D" id="3.90.1150.10">
    <property type="entry name" value="Aspartate Aminotransferase, domain 1"/>
    <property type="match status" value="1"/>
</dbReference>
<dbReference type="Gene3D" id="3.40.640.10">
    <property type="entry name" value="Type I PLP-dependent aspartate aminotransferase-like (Major domain)"/>
    <property type="match status" value="1"/>
</dbReference>
<dbReference type="HAMAP" id="MF_01023">
    <property type="entry name" value="HisC_aminotrans_2"/>
    <property type="match status" value="1"/>
</dbReference>
<dbReference type="InterPro" id="IPR001917">
    <property type="entry name" value="Aminotrans_II_pyridoxalP_BS"/>
</dbReference>
<dbReference type="InterPro" id="IPR004839">
    <property type="entry name" value="Aminotransferase_I/II_large"/>
</dbReference>
<dbReference type="InterPro" id="IPR005861">
    <property type="entry name" value="HisP_aminotrans"/>
</dbReference>
<dbReference type="InterPro" id="IPR015424">
    <property type="entry name" value="PyrdxlP-dep_Trfase"/>
</dbReference>
<dbReference type="InterPro" id="IPR015421">
    <property type="entry name" value="PyrdxlP-dep_Trfase_major"/>
</dbReference>
<dbReference type="InterPro" id="IPR015422">
    <property type="entry name" value="PyrdxlP-dep_Trfase_small"/>
</dbReference>
<dbReference type="NCBIfam" id="TIGR01141">
    <property type="entry name" value="hisC"/>
    <property type="match status" value="1"/>
</dbReference>
<dbReference type="PANTHER" id="PTHR42885:SF2">
    <property type="entry name" value="HISTIDINOL-PHOSPHATE AMINOTRANSFERASE"/>
    <property type="match status" value="1"/>
</dbReference>
<dbReference type="PANTHER" id="PTHR42885">
    <property type="entry name" value="HISTIDINOL-PHOSPHATE AMINOTRANSFERASE-RELATED"/>
    <property type="match status" value="1"/>
</dbReference>
<dbReference type="Pfam" id="PF00155">
    <property type="entry name" value="Aminotran_1_2"/>
    <property type="match status" value="1"/>
</dbReference>
<dbReference type="SUPFAM" id="SSF53383">
    <property type="entry name" value="PLP-dependent transferases"/>
    <property type="match status" value="1"/>
</dbReference>
<dbReference type="PROSITE" id="PS00599">
    <property type="entry name" value="AA_TRANSFER_CLASS_2"/>
    <property type="match status" value="1"/>
</dbReference>
<organism>
    <name type="scientific">Escherichia coli O7:K1 (strain IAI39 / ExPEC)</name>
    <dbReference type="NCBI Taxonomy" id="585057"/>
    <lineage>
        <taxon>Bacteria</taxon>
        <taxon>Pseudomonadati</taxon>
        <taxon>Pseudomonadota</taxon>
        <taxon>Gammaproteobacteria</taxon>
        <taxon>Enterobacterales</taxon>
        <taxon>Enterobacteriaceae</taxon>
        <taxon>Escherichia</taxon>
    </lineage>
</organism>
<gene>
    <name evidence="1" type="primary">hisC</name>
    <name type="ordered locus">ECIAI39_0997</name>
</gene>
<keyword id="KW-0028">Amino-acid biosynthesis</keyword>
<keyword id="KW-0032">Aminotransferase</keyword>
<keyword id="KW-0368">Histidine biosynthesis</keyword>
<keyword id="KW-0663">Pyridoxal phosphate</keyword>
<keyword id="KW-0808">Transferase</keyword>
<accession>B7NQG9</accession>
<evidence type="ECO:0000255" key="1">
    <source>
        <dbReference type="HAMAP-Rule" id="MF_01023"/>
    </source>
</evidence>
<feature type="chain" id="PRO_1000135393" description="Histidinol-phosphate aminotransferase">
    <location>
        <begin position="1"/>
        <end position="356"/>
    </location>
</feature>
<feature type="modified residue" description="N6-(pyridoxal phosphate)lysine" evidence="1">
    <location>
        <position position="214"/>
    </location>
</feature>
<proteinExistence type="inferred from homology"/>
<sequence length="356" mass="39418">MSTVTITDLARENVRNLTPYQSARRLGGNGDVWLNANEYPTAVEFQLTQQTLNRYPECQPKAVIDNYAQYAGIKPEQVLVSRGADEGIELLIRAFCEPGKDAILYCPPTYGMYSVSAETIGVECRTVPTLDNWQLDLQGISDKLDGVKVVYVCSPNNPTGQLINPQDFRTLLELTRGKAIVVADEAYIEFCPQASLAGWLTEYPHLAILRTLSKAFALAGLRCGFTLANEEVINLLMKVIAPYPLSTPVADIAAQALSPQGIVAMRERVVQIIAEREYLIAALKEIPCVEQVFDSETNYILARFKASSAVFKSLWDQGIILRDQNKQPSLSGCLRITVGTREESQRVIDALRAEQV</sequence>
<comment type="catalytic activity">
    <reaction evidence="1">
        <text>L-histidinol phosphate + 2-oxoglutarate = 3-(imidazol-4-yl)-2-oxopropyl phosphate + L-glutamate</text>
        <dbReference type="Rhea" id="RHEA:23744"/>
        <dbReference type="ChEBI" id="CHEBI:16810"/>
        <dbReference type="ChEBI" id="CHEBI:29985"/>
        <dbReference type="ChEBI" id="CHEBI:57766"/>
        <dbReference type="ChEBI" id="CHEBI:57980"/>
        <dbReference type="EC" id="2.6.1.9"/>
    </reaction>
</comment>
<comment type="cofactor">
    <cofactor evidence="1">
        <name>pyridoxal 5'-phosphate</name>
        <dbReference type="ChEBI" id="CHEBI:597326"/>
    </cofactor>
</comment>
<comment type="pathway">
    <text evidence="1">Amino-acid biosynthesis; L-histidine biosynthesis; L-histidine from 5-phospho-alpha-D-ribose 1-diphosphate: step 7/9.</text>
</comment>
<comment type="subunit">
    <text evidence="1">Homodimer.</text>
</comment>
<comment type="similarity">
    <text evidence="1">Belongs to the class-II pyridoxal-phosphate-dependent aminotransferase family. Histidinol-phosphate aminotransferase subfamily.</text>
</comment>